<protein>
    <recommendedName>
        <fullName>Protein diaphanous</fullName>
    </recommendedName>
</protein>
<name>DIA_DROME</name>
<comment type="function">
    <text evidence="7 9">Required for cytokinesis in both mitosis and meiosis. Has a role in actin cytoskeleton organization and is essential for many, if not all, actin-mediated events involving membrane invagination. May serve as a mediator between signaling molecules and actin organizers at specific phases of the cell cycle. Possible component of the contractile ring or may control its function.</text>
</comment>
<comment type="subunit">
    <text evidence="8">May interact (via CBD/FH3 domain) with Rho1.</text>
</comment>
<comment type="subcellular location">
    <subcellularLocation>
        <location evidence="9">Cytoplasm</location>
        <location evidence="9">Cytoskeleton</location>
    </subcellularLocation>
    <subcellularLocation>
        <location evidence="9">Cleavage furrow</location>
    </subcellularLocation>
    <subcellularLocation>
        <location evidence="8">Apical cell membrane</location>
    </subcellularLocation>
    <text evidence="8 9">Localizes to the site where the metaphase furrow is anticipated to form, to the growing tip of cellularization furrows, and to contractile rings (PubMed:7821209). Recruited to the apical cell membrane of epithelial cells in a Rho1 dependent manner, enhanced by phosphatidylinositol 4,5-bisphosphate (PtdIns[4,5]P(2)) enrichment established by sktl/skittles and Pten (PubMed:23853710).</text>
</comment>
<comment type="developmental stage">
    <text evidence="8">In stage 15 embryos expressed in epithelial cells of various tubular tissues including trachea, hindgut and salivary gland (at protein level).</text>
</comment>
<comment type="domain">
    <text evidence="1 8">The DAD domain regulates activation via by an autoinhibitory interaction with the GBD/FH3 domain. This autoinhibition is released upon competitive binding of an activated GTPase. The release of DAD allows the FH2 domain to then nucleate and elongate nonbranched actin filaments (By similarity). DAD-mediated autoinhibition negatively regulates dia localization to the apical cell cortex (PubMed:23853710).</text>
</comment>
<comment type="domain">
    <text evidence="8">The N terminal basic region is enriched in basic amino acids that may mediate interaction with negatively charged phosphatidylinositol 4,5-bisphosphate (PtdIns[4,5]P(2)). It is required, but not sufficient on its own, for efficient apical localization in polarized epithelial cells.</text>
</comment>
<comment type="domain">
    <text evidence="8">The GTPase binding domain (GBD) probably mediates interaction with Rho1 required for disruption of autoinhibition and targeted recruitment to the apical membrane of polarised epithelial cells.</text>
</comment>
<comment type="similarity">
    <text evidence="10">Belongs to the formin homology family. Diaphanous subfamily.</text>
</comment>
<reference key="1">
    <citation type="journal article" date="1994" name="Development">
        <title>Diaphanous is required for cytokinesis in Drosophila and shares domains of similarity with the products of the limb deformity gene.</title>
        <authorList>
            <person name="Castrillon D.H."/>
            <person name="Wasserman S.A."/>
        </authorList>
    </citation>
    <scope>NUCLEOTIDE SEQUENCE [MRNA]</scope>
    <scope>FUNCTION</scope>
    <scope>SUBCELLULAR LOCATION</scope>
</reference>
<reference key="2">
    <citation type="journal article" date="2000" name="Science">
        <title>The genome sequence of Drosophila melanogaster.</title>
        <authorList>
            <person name="Adams M.D."/>
            <person name="Celniker S.E."/>
            <person name="Holt R.A."/>
            <person name="Evans C.A."/>
            <person name="Gocayne J.D."/>
            <person name="Amanatides P.G."/>
            <person name="Scherer S.E."/>
            <person name="Li P.W."/>
            <person name="Hoskins R.A."/>
            <person name="Galle R.F."/>
            <person name="George R.A."/>
            <person name="Lewis S.E."/>
            <person name="Richards S."/>
            <person name="Ashburner M."/>
            <person name="Henderson S.N."/>
            <person name="Sutton G.G."/>
            <person name="Wortman J.R."/>
            <person name="Yandell M.D."/>
            <person name="Zhang Q."/>
            <person name="Chen L.X."/>
            <person name="Brandon R.C."/>
            <person name="Rogers Y.-H.C."/>
            <person name="Blazej R.G."/>
            <person name="Champe M."/>
            <person name="Pfeiffer B.D."/>
            <person name="Wan K.H."/>
            <person name="Doyle C."/>
            <person name="Baxter E.G."/>
            <person name="Helt G."/>
            <person name="Nelson C.R."/>
            <person name="Miklos G.L.G."/>
            <person name="Abril J.F."/>
            <person name="Agbayani A."/>
            <person name="An H.-J."/>
            <person name="Andrews-Pfannkoch C."/>
            <person name="Baldwin D."/>
            <person name="Ballew R.M."/>
            <person name="Basu A."/>
            <person name="Baxendale J."/>
            <person name="Bayraktaroglu L."/>
            <person name="Beasley E.M."/>
            <person name="Beeson K.Y."/>
            <person name="Benos P.V."/>
            <person name="Berman B.P."/>
            <person name="Bhandari D."/>
            <person name="Bolshakov S."/>
            <person name="Borkova D."/>
            <person name="Botchan M.R."/>
            <person name="Bouck J."/>
            <person name="Brokstein P."/>
            <person name="Brottier P."/>
            <person name="Burtis K.C."/>
            <person name="Busam D.A."/>
            <person name="Butler H."/>
            <person name="Cadieu E."/>
            <person name="Center A."/>
            <person name="Chandra I."/>
            <person name="Cherry J.M."/>
            <person name="Cawley S."/>
            <person name="Dahlke C."/>
            <person name="Davenport L.B."/>
            <person name="Davies P."/>
            <person name="de Pablos B."/>
            <person name="Delcher A."/>
            <person name="Deng Z."/>
            <person name="Mays A.D."/>
            <person name="Dew I."/>
            <person name="Dietz S.M."/>
            <person name="Dodson K."/>
            <person name="Doup L.E."/>
            <person name="Downes M."/>
            <person name="Dugan-Rocha S."/>
            <person name="Dunkov B.C."/>
            <person name="Dunn P."/>
            <person name="Durbin K.J."/>
            <person name="Evangelista C.C."/>
            <person name="Ferraz C."/>
            <person name="Ferriera S."/>
            <person name="Fleischmann W."/>
            <person name="Fosler C."/>
            <person name="Gabrielian A.E."/>
            <person name="Garg N.S."/>
            <person name="Gelbart W.M."/>
            <person name="Glasser K."/>
            <person name="Glodek A."/>
            <person name="Gong F."/>
            <person name="Gorrell J.H."/>
            <person name="Gu Z."/>
            <person name="Guan P."/>
            <person name="Harris M."/>
            <person name="Harris N.L."/>
            <person name="Harvey D.A."/>
            <person name="Heiman T.J."/>
            <person name="Hernandez J.R."/>
            <person name="Houck J."/>
            <person name="Hostin D."/>
            <person name="Houston K.A."/>
            <person name="Howland T.J."/>
            <person name="Wei M.-H."/>
            <person name="Ibegwam C."/>
            <person name="Jalali M."/>
            <person name="Kalush F."/>
            <person name="Karpen G.H."/>
            <person name="Ke Z."/>
            <person name="Kennison J.A."/>
            <person name="Ketchum K.A."/>
            <person name="Kimmel B.E."/>
            <person name="Kodira C.D."/>
            <person name="Kraft C.L."/>
            <person name="Kravitz S."/>
            <person name="Kulp D."/>
            <person name="Lai Z."/>
            <person name="Lasko P."/>
            <person name="Lei Y."/>
            <person name="Levitsky A.A."/>
            <person name="Li J.H."/>
            <person name="Li Z."/>
            <person name="Liang Y."/>
            <person name="Lin X."/>
            <person name="Liu X."/>
            <person name="Mattei B."/>
            <person name="McIntosh T.C."/>
            <person name="McLeod M.P."/>
            <person name="McPherson D."/>
            <person name="Merkulov G."/>
            <person name="Milshina N.V."/>
            <person name="Mobarry C."/>
            <person name="Morris J."/>
            <person name="Moshrefi A."/>
            <person name="Mount S.M."/>
            <person name="Moy M."/>
            <person name="Murphy B."/>
            <person name="Murphy L."/>
            <person name="Muzny D.M."/>
            <person name="Nelson D.L."/>
            <person name="Nelson D.R."/>
            <person name="Nelson K.A."/>
            <person name="Nixon K."/>
            <person name="Nusskern D.R."/>
            <person name="Pacleb J.M."/>
            <person name="Palazzolo M."/>
            <person name="Pittman G.S."/>
            <person name="Pan S."/>
            <person name="Pollard J."/>
            <person name="Puri V."/>
            <person name="Reese M.G."/>
            <person name="Reinert K."/>
            <person name="Remington K."/>
            <person name="Saunders R.D.C."/>
            <person name="Scheeler F."/>
            <person name="Shen H."/>
            <person name="Shue B.C."/>
            <person name="Siden-Kiamos I."/>
            <person name="Simpson M."/>
            <person name="Skupski M.P."/>
            <person name="Smith T.J."/>
            <person name="Spier E."/>
            <person name="Spradling A.C."/>
            <person name="Stapleton M."/>
            <person name="Strong R."/>
            <person name="Sun E."/>
            <person name="Svirskas R."/>
            <person name="Tector C."/>
            <person name="Turner R."/>
            <person name="Venter E."/>
            <person name="Wang A.H."/>
            <person name="Wang X."/>
            <person name="Wang Z.-Y."/>
            <person name="Wassarman D.A."/>
            <person name="Weinstock G.M."/>
            <person name="Weissenbach J."/>
            <person name="Williams S.M."/>
            <person name="Woodage T."/>
            <person name="Worley K.C."/>
            <person name="Wu D."/>
            <person name="Yang S."/>
            <person name="Yao Q.A."/>
            <person name="Ye J."/>
            <person name="Yeh R.-F."/>
            <person name="Zaveri J.S."/>
            <person name="Zhan M."/>
            <person name="Zhang G."/>
            <person name="Zhao Q."/>
            <person name="Zheng L."/>
            <person name="Zheng X.H."/>
            <person name="Zhong F.N."/>
            <person name="Zhong W."/>
            <person name="Zhou X."/>
            <person name="Zhu S.C."/>
            <person name="Zhu X."/>
            <person name="Smith H.O."/>
            <person name="Gibbs R.A."/>
            <person name="Myers E.W."/>
            <person name="Rubin G.M."/>
            <person name="Venter J.C."/>
        </authorList>
    </citation>
    <scope>NUCLEOTIDE SEQUENCE [LARGE SCALE GENOMIC DNA]</scope>
    <source>
        <strain>Berkeley</strain>
    </source>
</reference>
<reference key="3">
    <citation type="journal article" date="2002" name="Genome Biol.">
        <title>Annotation of the Drosophila melanogaster euchromatic genome: a systematic review.</title>
        <authorList>
            <person name="Misra S."/>
            <person name="Crosby M.A."/>
            <person name="Mungall C.J."/>
            <person name="Matthews B.B."/>
            <person name="Campbell K.S."/>
            <person name="Hradecky P."/>
            <person name="Huang Y."/>
            <person name="Kaminker J.S."/>
            <person name="Millburn G.H."/>
            <person name="Prochnik S.E."/>
            <person name="Smith C.D."/>
            <person name="Tupy J.L."/>
            <person name="Whitfield E.J."/>
            <person name="Bayraktaroglu L."/>
            <person name="Berman B.P."/>
            <person name="Bettencourt B.R."/>
            <person name="Celniker S.E."/>
            <person name="de Grey A.D.N.J."/>
            <person name="Drysdale R.A."/>
            <person name="Harris N.L."/>
            <person name="Richter J."/>
            <person name="Russo S."/>
            <person name="Schroeder A.J."/>
            <person name="Shu S.Q."/>
            <person name="Stapleton M."/>
            <person name="Yamada C."/>
            <person name="Ashburner M."/>
            <person name="Gelbart W.M."/>
            <person name="Rubin G.M."/>
            <person name="Lewis S.E."/>
        </authorList>
    </citation>
    <scope>GENOME REANNOTATION</scope>
    <source>
        <strain>Berkeley</strain>
    </source>
</reference>
<reference key="4">
    <citation type="submission" date="2006-06" db="EMBL/GenBank/DDBJ databases">
        <authorList>
            <person name="Stapleton M."/>
            <person name="Carlson J.W."/>
            <person name="Chavez C."/>
            <person name="Frise E."/>
            <person name="George R.A."/>
            <person name="Pacleb J.M."/>
            <person name="Park S."/>
            <person name="Wan K.H."/>
            <person name="Yu C."/>
            <person name="Celniker S.E."/>
        </authorList>
    </citation>
    <scope>NUCLEOTIDE SEQUENCE [LARGE SCALE MRNA]</scope>
    <source>
        <strain>Berkeley</strain>
        <tissue>Embryo</tissue>
    </source>
</reference>
<reference key="5">
    <citation type="journal article" date="2000" name="Development">
        <title>Functional analysis of the Drosophila diaphanous FH protein in early embryonic development.</title>
        <authorList>
            <person name="Afshar K."/>
            <person name="Stuart B."/>
            <person name="Wasserman S.A."/>
        </authorList>
    </citation>
    <scope>FUNCTION</scope>
</reference>
<reference key="6">
    <citation type="journal article" date="2013" name="Elife">
        <title>Apical targeting of the formin Diaphanous in Drosophila tubular epithelia.</title>
        <authorList>
            <person name="Rousso T."/>
            <person name="Shewan A.M."/>
            <person name="Mostov K.E."/>
            <person name="Schejter E.D."/>
            <person name="Shilo B.Z."/>
        </authorList>
    </citation>
    <scope>INTERACTION WITH RHO1</scope>
    <scope>SUBCELLULAR LOCATION</scope>
    <scope>DEVELOPMENTAL STAGE</scope>
    <scope>DOMAIN</scope>
    <scope>MUTAGENESIS OF 147-VAL--SER-151</scope>
</reference>
<sequence>MSRHEKTKSTGGGLLDSLFGRPSKSKGGTISSGTLAHGGRPVSADNYVVPGVEDFEQYIQQLSVAELDAKFLEIIEDMNIPKDKREPLLAKSKEERQKMIMWHLKGKNSLERSANSRFEKPIDYVEYLQNGEHSTHKVYQCVESLRVALTSNPISWIKEFGVAGIGTIEKLLARSKNNASYEKIEFEAIRCLKAIMNNTWGLNVVLNPDQHSVVLLLAQSLDPRKPQTMCEALKLLASFCIVYERNGYEKVLRAITTIAATSFKASERFRPIVDALFASDQQDPKRDLACHSLIFINTLTNTPTDLNFRLHLRCEIMRMGLYDRLDEFTKIVEASNNENLQQHFKIFNEIREDDFEEFVQRFDNVTFNMDDATDCFDVLKNLVTDTTSEPYFLSILQHLLYIRDDFYFRPAYYQLIEECISQIVFHKGYCDPNFENRNFNIDTSLLLDDIVEKAKAKESKRSEEYEKKIEQLESAKQEAEAKAAHLEEKVKLMEANGVAAPSPNKLPKVNIPMPPPPPGGGGAPPPPPPPMPGRAGGGPPPPPPPPMPGRAGGPPPPPPPPGMGGPPPPPMPGMMRPGGGPPPPPMMMGPMVPVLPHGLKPKKKWDVKNPMKRANWKAIVPAKMSDKAFWVKCQEDKLAQDDFLAELAVKFSSKPVKKEQKDAVDKPTTLTKKNVDLRVLDSKTAQNLAIMLGGSLKHLSYEQIKICLLRCDTDILSSNILQQLIQYLPPPEHLKRLQEIKAKGEPLPPIEQFAATIGEIKRLSPRLHNLNFKLTYADMVQDIKPDIVAGTAACEEIRNSKKFSKILELILLLGNYMNSGSKNEAAFGFEISYLTKLSNTKDADNKQTLLHYLADLVEKKFPDALNFYDDLSHVNKASRVNMDAIQKAMRQMNSAVKNLETDLQNNKVPQCDDDKFSEVMGKFAEECRQQVDVLGKMQLQMEKLYKDLSEYYAFDPSKYTMEEFFADIKTFKDAFQAAHNDNVRVREELEKKRRLQEAREQSAREQQERQQRKKAVVDMDAPQTQEGVMDSLLEALQTGSAFGQRNRQARRQRPAGAERRAQLSRSRSRTRVTNGQLMTREMILNEVLGSA</sequence>
<dbReference type="EMBL" id="U11288">
    <property type="protein sequence ID" value="AAA67715.1"/>
    <property type="molecule type" value="mRNA"/>
</dbReference>
<dbReference type="EMBL" id="AE014134">
    <property type="protein sequence ID" value="AAF53922.1"/>
    <property type="molecule type" value="Genomic_DNA"/>
</dbReference>
<dbReference type="EMBL" id="AE014134">
    <property type="protein sequence ID" value="AAN11087.1"/>
    <property type="molecule type" value="Genomic_DNA"/>
</dbReference>
<dbReference type="EMBL" id="BT021398">
    <property type="protein sequence ID" value="AAX33546.1"/>
    <property type="molecule type" value="mRNA"/>
</dbReference>
<dbReference type="PIR" id="T13170">
    <property type="entry name" value="T13170"/>
</dbReference>
<dbReference type="RefSeq" id="NP_001260640.1">
    <property type="nucleotide sequence ID" value="NM_001273711.1"/>
</dbReference>
<dbReference type="RefSeq" id="NP_476981.1">
    <property type="nucleotide sequence ID" value="NM_057633.5"/>
</dbReference>
<dbReference type="RefSeq" id="NP_724285.1">
    <property type="nucleotide sequence ID" value="NM_165341.3"/>
</dbReference>
<dbReference type="SMR" id="P48608"/>
<dbReference type="BioGRID" id="61303">
    <property type="interactions" value="26"/>
</dbReference>
<dbReference type="DIP" id="DIP-22062N"/>
<dbReference type="FunCoup" id="P48608">
    <property type="interactions" value="396"/>
</dbReference>
<dbReference type="IntAct" id="P48608">
    <property type="interactions" value="11"/>
</dbReference>
<dbReference type="STRING" id="7227.FBpp0297103"/>
<dbReference type="PaxDb" id="7227-FBpp0297103"/>
<dbReference type="DNASU" id="35340"/>
<dbReference type="EnsemblMetazoa" id="FBtr0081410">
    <property type="protein sequence ID" value="FBpp0080940"/>
    <property type="gene ID" value="FBgn0011202"/>
</dbReference>
<dbReference type="EnsemblMetazoa" id="FBtr0081411">
    <property type="protein sequence ID" value="FBpp0080941"/>
    <property type="gene ID" value="FBgn0011202"/>
</dbReference>
<dbReference type="EnsemblMetazoa" id="FBtr0335145">
    <property type="protein sequence ID" value="FBpp0307144"/>
    <property type="gene ID" value="FBgn0011202"/>
</dbReference>
<dbReference type="GeneID" id="35340"/>
<dbReference type="KEGG" id="dme:Dmel_CG1768"/>
<dbReference type="UCSC" id="CG1768-RA">
    <property type="organism name" value="d. melanogaster"/>
</dbReference>
<dbReference type="AGR" id="FB:FBgn0011202"/>
<dbReference type="CTD" id="35340"/>
<dbReference type="FlyBase" id="FBgn0011202">
    <property type="gene designation" value="dia"/>
</dbReference>
<dbReference type="VEuPathDB" id="VectorBase:FBgn0011202"/>
<dbReference type="eggNOG" id="KOG1924">
    <property type="taxonomic scope" value="Eukaryota"/>
</dbReference>
<dbReference type="GeneTree" id="ENSGT00940000170492"/>
<dbReference type="HOGENOM" id="CLU_002356_0_1_1"/>
<dbReference type="InParanoid" id="P48608"/>
<dbReference type="OrthoDB" id="1104827at2759"/>
<dbReference type="PhylomeDB" id="P48608"/>
<dbReference type="Reactome" id="R-DME-5663220">
    <property type="pathway name" value="RHO GTPases Activate Formins"/>
</dbReference>
<dbReference type="Reactome" id="R-DME-6785631">
    <property type="pathway name" value="ERBB2 Regulates Cell Motility"/>
</dbReference>
<dbReference type="Reactome" id="R-DME-6798695">
    <property type="pathway name" value="Neutrophil degranulation"/>
</dbReference>
<dbReference type="Reactome" id="R-DME-8980692">
    <property type="pathway name" value="RHOA GTPase cycle"/>
</dbReference>
<dbReference type="Reactome" id="R-DME-9013026">
    <property type="pathway name" value="RHOB GTPase cycle"/>
</dbReference>
<dbReference type="Reactome" id="R-DME-9013149">
    <property type="pathway name" value="RAC1 GTPase cycle"/>
</dbReference>
<dbReference type="Reactome" id="R-DME-9013404">
    <property type="pathway name" value="RAC2 GTPase cycle"/>
</dbReference>
<dbReference type="Reactome" id="R-DME-9013405">
    <property type="pathway name" value="RHOD GTPase cycle"/>
</dbReference>
<dbReference type="Reactome" id="R-DME-9013406">
    <property type="pathway name" value="RHOQ GTPase cycle"/>
</dbReference>
<dbReference type="Reactome" id="R-DME-9013408">
    <property type="pathway name" value="RHOG GTPase cycle"/>
</dbReference>
<dbReference type="Reactome" id="R-DME-9013423">
    <property type="pathway name" value="RAC3 GTPase cycle"/>
</dbReference>
<dbReference type="Reactome" id="R-DME-9035034">
    <property type="pathway name" value="RHOF GTPase cycle"/>
</dbReference>
<dbReference type="SignaLink" id="P48608"/>
<dbReference type="BioGRID-ORCS" id="35340">
    <property type="hits" value="0 hits in 3 CRISPR screens"/>
</dbReference>
<dbReference type="GenomeRNAi" id="35340"/>
<dbReference type="PRO" id="PR:P48608"/>
<dbReference type="Proteomes" id="UP000000803">
    <property type="component" value="Chromosome 2L"/>
</dbReference>
<dbReference type="Bgee" id="FBgn0011202">
    <property type="expression patterns" value="Expressed in adult Malpighian tubule principal cell of lower ureter in Malpighian tubule and 169 other cell types or tissues"/>
</dbReference>
<dbReference type="ExpressionAtlas" id="P48608">
    <property type="expression patterns" value="baseline and differential"/>
</dbReference>
<dbReference type="GO" id="GO:0045177">
    <property type="term" value="C:apical part of cell"/>
    <property type="evidence" value="ECO:0000314"/>
    <property type="project" value="FlyBase"/>
</dbReference>
<dbReference type="GO" id="GO:0016324">
    <property type="term" value="C:apical plasma membrane"/>
    <property type="evidence" value="ECO:0007669"/>
    <property type="project" value="UniProtKB-SubCell"/>
</dbReference>
<dbReference type="GO" id="GO:0005938">
    <property type="term" value="C:cell cortex"/>
    <property type="evidence" value="ECO:0000314"/>
    <property type="project" value="FlyBase"/>
</dbReference>
<dbReference type="GO" id="GO:0032154">
    <property type="term" value="C:cleavage furrow"/>
    <property type="evidence" value="ECO:0000314"/>
    <property type="project" value="FlyBase"/>
</dbReference>
<dbReference type="GO" id="GO:0005737">
    <property type="term" value="C:cytoplasm"/>
    <property type="evidence" value="ECO:0000314"/>
    <property type="project" value="FlyBase"/>
</dbReference>
<dbReference type="GO" id="GO:0005856">
    <property type="term" value="C:cytoskeleton"/>
    <property type="evidence" value="ECO:0007669"/>
    <property type="project" value="UniProtKB-SubCell"/>
</dbReference>
<dbReference type="GO" id="GO:0031430">
    <property type="term" value="C:M band"/>
    <property type="evidence" value="ECO:0000314"/>
    <property type="project" value="FlyBase"/>
</dbReference>
<dbReference type="GO" id="GO:0032991">
    <property type="term" value="C:protein-containing complex"/>
    <property type="evidence" value="ECO:0000353"/>
    <property type="project" value="FlyBase"/>
</dbReference>
<dbReference type="GO" id="GO:0012506">
    <property type="term" value="C:vesicle membrane"/>
    <property type="evidence" value="ECO:0000314"/>
    <property type="project" value="FlyBase"/>
</dbReference>
<dbReference type="GO" id="GO:0030018">
    <property type="term" value="C:Z disc"/>
    <property type="evidence" value="ECO:0000314"/>
    <property type="project" value="FlyBase"/>
</dbReference>
<dbReference type="GO" id="GO:0003779">
    <property type="term" value="F:actin binding"/>
    <property type="evidence" value="ECO:0007669"/>
    <property type="project" value="UniProtKB-KW"/>
</dbReference>
<dbReference type="GO" id="GO:0005546">
    <property type="term" value="F:phosphatidylinositol-4,5-bisphosphate binding"/>
    <property type="evidence" value="ECO:0000315"/>
    <property type="project" value="FlyBase"/>
</dbReference>
<dbReference type="GO" id="GO:0031267">
    <property type="term" value="F:small GTPase binding"/>
    <property type="evidence" value="ECO:0000315"/>
    <property type="project" value="FlyBase"/>
</dbReference>
<dbReference type="GO" id="GO:0030036">
    <property type="term" value="P:actin cytoskeleton organization"/>
    <property type="evidence" value="ECO:0000315"/>
    <property type="project" value="FlyBase"/>
</dbReference>
<dbReference type="GO" id="GO:0007015">
    <property type="term" value="P:actin filament organization"/>
    <property type="evidence" value="ECO:0000315"/>
    <property type="project" value="FlyBase"/>
</dbReference>
<dbReference type="GO" id="GO:0030041">
    <property type="term" value="P:actin filament polymerization"/>
    <property type="evidence" value="ECO:0000318"/>
    <property type="project" value="GO_Central"/>
</dbReference>
<dbReference type="GO" id="GO:0045010">
    <property type="term" value="P:actin nucleation"/>
    <property type="evidence" value="ECO:0000314"/>
    <property type="project" value="FlyBase"/>
</dbReference>
<dbReference type="GO" id="GO:0000915">
    <property type="term" value="P:actomyosin contractile ring assembly"/>
    <property type="evidence" value="ECO:0000315"/>
    <property type="project" value="FlyBase"/>
</dbReference>
<dbReference type="GO" id="GO:0003383">
    <property type="term" value="P:apical constriction"/>
    <property type="evidence" value="ECO:0000315"/>
    <property type="project" value="FlyBase"/>
</dbReference>
<dbReference type="GO" id="GO:0106036">
    <property type="term" value="P:assembly of apicomedial cortex actomyosin"/>
    <property type="evidence" value="ECO:0000314"/>
    <property type="project" value="FlyBase"/>
</dbReference>
<dbReference type="GO" id="GO:0007349">
    <property type="term" value="P:cellularization"/>
    <property type="evidence" value="ECO:0000315"/>
    <property type="project" value="FlyBase"/>
</dbReference>
<dbReference type="GO" id="GO:0032507">
    <property type="term" value="P:maintenance of protein location in cell"/>
    <property type="evidence" value="ECO:0000315"/>
    <property type="project" value="FlyBase"/>
</dbReference>
<dbReference type="GO" id="GO:0007110">
    <property type="term" value="P:meiosis I cytokinesis"/>
    <property type="evidence" value="ECO:0000315"/>
    <property type="project" value="FlyBase"/>
</dbReference>
<dbReference type="GO" id="GO:0007111">
    <property type="term" value="P:meiosis II cytokinesis"/>
    <property type="evidence" value="ECO:0000315"/>
    <property type="project" value="FlyBase"/>
</dbReference>
<dbReference type="GO" id="GO:0035011">
    <property type="term" value="P:melanotic encapsulation of foreign target"/>
    <property type="evidence" value="ECO:0000315"/>
    <property type="project" value="FlyBase"/>
</dbReference>
<dbReference type="GO" id="GO:0045448">
    <property type="term" value="P:mitotic cell cycle, embryonic"/>
    <property type="evidence" value="ECO:0000315"/>
    <property type="project" value="FlyBase"/>
</dbReference>
<dbReference type="GO" id="GO:0000281">
    <property type="term" value="P:mitotic cytokinesis"/>
    <property type="evidence" value="ECO:0000315"/>
    <property type="project" value="FlyBase"/>
</dbReference>
<dbReference type="GO" id="GO:0007424">
    <property type="term" value="P:open tracheal system development"/>
    <property type="evidence" value="ECO:0000315"/>
    <property type="project" value="FlyBase"/>
</dbReference>
<dbReference type="GO" id="GO:0097320">
    <property type="term" value="P:plasma membrane tubulation"/>
    <property type="evidence" value="ECO:0000315"/>
    <property type="project" value="FlyBase"/>
</dbReference>
<dbReference type="GO" id="GO:0007279">
    <property type="term" value="P:pole cell formation"/>
    <property type="evidence" value="ECO:0000315"/>
    <property type="project" value="FlyBase"/>
</dbReference>
<dbReference type="GO" id="GO:0030838">
    <property type="term" value="P:positive regulation of actin filament polymerization"/>
    <property type="evidence" value="ECO:0000314"/>
    <property type="project" value="FlyBase"/>
</dbReference>
<dbReference type="GO" id="GO:0090303">
    <property type="term" value="P:positive regulation of wound healing"/>
    <property type="evidence" value="ECO:0000315"/>
    <property type="project" value="FlyBase"/>
</dbReference>
<dbReference type="GO" id="GO:0008104">
    <property type="term" value="P:protein localization"/>
    <property type="evidence" value="ECO:0000315"/>
    <property type="project" value="FlyBase"/>
</dbReference>
<dbReference type="GO" id="GO:0009306">
    <property type="term" value="P:protein secretion"/>
    <property type="evidence" value="ECO:0000315"/>
    <property type="project" value="FlyBase"/>
</dbReference>
<dbReference type="GO" id="GO:0030589">
    <property type="term" value="P:pseudocleavage involved in syncytial blastoderm formation"/>
    <property type="evidence" value="ECO:0000315"/>
    <property type="project" value="FlyBase"/>
</dbReference>
<dbReference type="GO" id="GO:0110020">
    <property type="term" value="P:regulation of actomyosin structure organization"/>
    <property type="evidence" value="ECO:0000315"/>
    <property type="project" value="FlyBase"/>
</dbReference>
<dbReference type="GO" id="GO:0016476">
    <property type="term" value="P:regulation of embryonic cell shape"/>
    <property type="evidence" value="ECO:0000315"/>
    <property type="project" value="FlyBase"/>
</dbReference>
<dbReference type="GO" id="GO:0051489">
    <property type="term" value="P:regulation of filopodium assembly"/>
    <property type="evidence" value="ECO:0000315"/>
    <property type="project" value="FlyBase"/>
</dbReference>
<dbReference type="GO" id="GO:0007435">
    <property type="term" value="P:salivary gland morphogenesis"/>
    <property type="evidence" value="ECO:0000315"/>
    <property type="project" value="FlyBase"/>
</dbReference>
<dbReference type="GO" id="GO:0045214">
    <property type="term" value="P:sarcomere organization"/>
    <property type="evidence" value="ECO:0000315"/>
    <property type="project" value="FlyBase"/>
</dbReference>
<dbReference type="GO" id="GO:0007605">
    <property type="term" value="P:sensory perception of sound"/>
    <property type="evidence" value="ECO:0000315"/>
    <property type="project" value="FlyBase"/>
</dbReference>
<dbReference type="GO" id="GO:0051225">
    <property type="term" value="P:spindle assembly"/>
    <property type="evidence" value="ECO:0000315"/>
    <property type="project" value="FlyBase"/>
</dbReference>
<dbReference type="FunFam" id="1.20.58.630:FF:000002">
    <property type="entry name" value="Diaphanous, isoform D"/>
    <property type="match status" value="1"/>
</dbReference>
<dbReference type="FunFam" id="1.20.58.2220:FF:000015">
    <property type="entry name" value="Diaphanous, isoform E"/>
    <property type="match status" value="1"/>
</dbReference>
<dbReference type="FunFam" id="1.25.10.10:FF:000603">
    <property type="entry name" value="Diaphanous, isoform E"/>
    <property type="match status" value="1"/>
</dbReference>
<dbReference type="Gene3D" id="1.20.58.630">
    <property type="match status" value="1"/>
</dbReference>
<dbReference type="Gene3D" id="6.10.30.30">
    <property type="match status" value="1"/>
</dbReference>
<dbReference type="Gene3D" id="1.10.20.40">
    <property type="entry name" value="Formin, diaphanous GTPase-binding domain"/>
    <property type="match status" value="1"/>
</dbReference>
<dbReference type="Gene3D" id="1.20.58.2220">
    <property type="entry name" value="Formin, FH2 domain"/>
    <property type="match status" value="1"/>
</dbReference>
<dbReference type="Gene3D" id="1.10.238.150">
    <property type="entry name" value="Formin, FH3 diaphanous domain"/>
    <property type="match status" value="1"/>
</dbReference>
<dbReference type="Gene3D" id="1.25.10.10">
    <property type="entry name" value="Leucine-rich Repeat Variant"/>
    <property type="match status" value="1"/>
</dbReference>
<dbReference type="InterPro" id="IPR011989">
    <property type="entry name" value="ARM-like"/>
</dbReference>
<dbReference type="InterPro" id="IPR016024">
    <property type="entry name" value="ARM-type_fold"/>
</dbReference>
<dbReference type="InterPro" id="IPR014767">
    <property type="entry name" value="DAD_dom"/>
</dbReference>
<dbReference type="InterPro" id="IPR044933">
    <property type="entry name" value="DIA_GBD_sf"/>
</dbReference>
<dbReference type="InterPro" id="IPR010465">
    <property type="entry name" value="Drf_DAD"/>
</dbReference>
<dbReference type="InterPro" id="IPR015425">
    <property type="entry name" value="FH2_Formin"/>
</dbReference>
<dbReference type="InterPro" id="IPR042201">
    <property type="entry name" value="FH2_Formin_sf"/>
</dbReference>
<dbReference type="InterPro" id="IPR010472">
    <property type="entry name" value="FH3_dom"/>
</dbReference>
<dbReference type="InterPro" id="IPR051412">
    <property type="entry name" value="Formin_Homology_Diaphanous_sf"/>
</dbReference>
<dbReference type="InterPro" id="IPR014768">
    <property type="entry name" value="GBD/FH3_dom"/>
</dbReference>
<dbReference type="InterPro" id="IPR010473">
    <property type="entry name" value="GTPase-bd"/>
</dbReference>
<dbReference type="PANTHER" id="PTHR45691">
    <property type="entry name" value="PROTEIN DIAPHANOUS"/>
    <property type="match status" value="1"/>
</dbReference>
<dbReference type="PANTHER" id="PTHR45691:SF6">
    <property type="entry name" value="PROTEIN DIAPHANOUS"/>
    <property type="match status" value="1"/>
</dbReference>
<dbReference type="Pfam" id="PF06345">
    <property type="entry name" value="Drf_DAD"/>
    <property type="match status" value="1"/>
</dbReference>
<dbReference type="Pfam" id="PF06367">
    <property type="entry name" value="Drf_FH3"/>
    <property type="match status" value="1"/>
</dbReference>
<dbReference type="Pfam" id="PF06371">
    <property type="entry name" value="Drf_GBD"/>
    <property type="match status" value="1"/>
</dbReference>
<dbReference type="Pfam" id="PF02181">
    <property type="entry name" value="FH2"/>
    <property type="match status" value="1"/>
</dbReference>
<dbReference type="SMART" id="SM01139">
    <property type="entry name" value="Drf_FH3"/>
    <property type="match status" value="1"/>
</dbReference>
<dbReference type="SMART" id="SM01140">
    <property type="entry name" value="Drf_GBD"/>
    <property type="match status" value="1"/>
</dbReference>
<dbReference type="SMART" id="SM00498">
    <property type="entry name" value="FH2"/>
    <property type="match status" value="1"/>
</dbReference>
<dbReference type="SUPFAM" id="SSF48371">
    <property type="entry name" value="ARM repeat"/>
    <property type="match status" value="1"/>
</dbReference>
<dbReference type="SUPFAM" id="SSF81995">
    <property type="entry name" value="beta-sandwich domain of Sec23/24"/>
    <property type="match status" value="1"/>
</dbReference>
<dbReference type="SUPFAM" id="SSF101447">
    <property type="entry name" value="Formin homology 2 domain (FH2 domain)"/>
    <property type="match status" value="1"/>
</dbReference>
<dbReference type="PROSITE" id="PS51231">
    <property type="entry name" value="DAD"/>
    <property type="match status" value="1"/>
</dbReference>
<dbReference type="PROSITE" id="PS51444">
    <property type="entry name" value="FH2"/>
    <property type="match status" value="1"/>
</dbReference>
<dbReference type="PROSITE" id="PS51232">
    <property type="entry name" value="GBD_FH3"/>
    <property type="match status" value="1"/>
</dbReference>
<gene>
    <name type="primary">dia</name>
    <name type="ORF">CG1768</name>
</gene>
<organism>
    <name type="scientific">Drosophila melanogaster</name>
    <name type="common">Fruit fly</name>
    <dbReference type="NCBI Taxonomy" id="7227"/>
    <lineage>
        <taxon>Eukaryota</taxon>
        <taxon>Metazoa</taxon>
        <taxon>Ecdysozoa</taxon>
        <taxon>Arthropoda</taxon>
        <taxon>Hexapoda</taxon>
        <taxon>Insecta</taxon>
        <taxon>Pterygota</taxon>
        <taxon>Neoptera</taxon>
        <taxon>Endopterygota</taxon>
        <taxon>Diptera</taxon>
        <taxon>Brachycera</taxon>
        <taxon>Muscomorpha</taxon>
        <taxon>Ephydroidea</taxon>
        <taxon>Drosophilidae</taxon>
        <taxon>Drosophila</taxon>
        <taxon>Sophophora</taxon>
    </lineage>
</organism>
<feature type="chain" id="PRO_0000194892" description="Protein diaphanous">
    <location>
        <begin position="1"/>
        <end position="1091"/>
    </location>
</feature>
<feature type="domain" description="GBD/FH3" evidence="4">
    <location>
        <begin position="59"/>
        <end position="431"/>
    </location>
</feature>
<feature type="domain" description="FH1">
    <location>
        <begin position="512"/>
        <end position="596"/>
    </location>
</feature>
<feature type="domain" description="FH2" evidence="5">
    <location>
        <begin position="601"/>
        <end position="1001"/>
    </location>
</feature>
<feature type="domain" description="DAD" evidence="3">
    <location>
        <begin position="1022"/>
        <end position="1054"/>
    </location>
</feature>
<feature type="region of interest" description="Basic region" evidence="8">
    <location>
        <begin position="1"/>
        <end position="56"/>
    </location>
</feature>
<feature type="region of interest" description="Disordered" evidence="6">
    <location>
        <begin position="1"/>
        <end position="37"/>
    </location>
</feature>
<feature type="region of interest" description="Disordered" evidence="6">
    <location>
        <begin position="499"/>
        <end position="589"/>
    </location>
</feature>
<feature type="region of interest" description="Disordered" evidence="6">
    <location>
        <begin position="994"/>
        <end position="1021"/>
    </location>
</feature>
<feature type="region of interest" description="Disordered" evidence="6">
    <location>
        <begin position="1039"/>
        <end position="1072"/>
    </location>
</feature>
<feature type="coiled-coil region" evidence="2">
    <location>
        <begin position="455"/>
        <end position="496"/>
    </location>
</feature>
<feature type="compositionally biased region" description="Low complexity" evidence="6">
    <location>
        <begin position="25"/>
        <end position="34"/>
    </location>
</feature>
<feature type="compositionally biased region" description="Pro residues" evidence="6">
    <location>
        <begin position="512"/>
        <end position="572"/>
    </location>
</feature>
<feature type="compositionally biased region" description="Basic and acidic residues" evidence="6">
    <location>
        <begin position="994"/>
        <end position="1010"/>
    </location>
</feature>
<feature type="mutagenesis site" description="Disruption of interaction with small GTPase Rho1 and failure to recruit to apical membranes." evidence="8">
    <original>VALTS</original>
    <variation>DALTE</variation>
    <location>
        <begin position="147"/>
        <end position="151"/>
    </location>
</feature>
<feature type="sequence conflict" description="In Ref. 1; AAA67715." evidence="10" ref="1">
    <original>H</original>
    <variation>Q</variation>
    <location>
        <position position="733"/>
    </location>
</feature>
<evidence type="ECO:0000250" key="1"/>
<evidence type="ECO:0000255" key="2"/>
<evidence type="ECO:0000255" key="3">
    <source>
        <dbReference type="PROSITE-ProRule" id="PRU00577"/>
    </source>
</evidence>
<evidence type="ECO:0000255" key="4">
    <source>
        <dbReference type="PROSITE-ProRule" id="PRU00579"/>
    </source>
</evidence>
<evidence type="ECO:0000255" key="5">
    <source>
        <dbReference type="PROSITE-ProRule" id="PRU00774"/>
    </source>
</evidence>
<evidence type="ECO:0000256" key="6">
    <source>
        <dbReference type="SAM" id="MobiDB-lite"/>
    </source>
</evidence>
<evidence type="ECO:0000269" key="7">
    <source>
    </source>
</evidence>
<evidence type="ECO:0000269" key="8">
    <source>
    </source>
</evidence>
<evidence type="ECO:0000269" key="9">
    <source>
    </source>
</evidence>
<evidence type="ECO:0000305" key="10"/>
<accession>P48608</accession>
<accession>Q5BI26</accession>
<accession>Q9VIJ7</accession>
<keyword id="KW-0009">Actin-binding</keyword>
<keyword id="KW-0131">Cell cycle</keyword>
<keyword id="KW-0132">Cell division</keyword>
<keyword id="KW-1003">Cell membrane</keyword>
<keyword id="KW-0175">Coiled coil</keyword>
<keyword id="KW-0963">Cytoplasm</keyword>
<keyword id="KW-0206">Cytoskeleton</keyword>
<keyword id="KW-0472">Membrane</keyword>
<keyword id="KW-1185">Reference proteome</keyword>
<proteinExistence type="evidence at protein level"/>